<comment type="function">
    <text evidence="1">Catalyzes the 2-thiolation of uridine at the wobble position (U34) of tRNA, leading to the formation of s(2)U34.</text>
</comment>
<comment type="catalytic activity">
    <reaction evidence="1">
        <text>S-sulfanyl-L-cysteinyl-[protein] + uridine(34) in tRNA + AH2 + ATP = 2-thiouridine(34) in tRNA + L-cysteinyl-[protein] + A + AMP + diphosphate + H(+)</text>
        <dbReference type="Rhea" id="RHEA:47032"/>
        <dbReference type="Rhea" id="RHEA-COMP:10131"/>
        <dbReference type="Rhea" id="RHEA-COMP:11726"/>
        <dbReference type="Rhea" id="RHEA-COMP:11727"/>
        <dbReference type="Rhea" id="RHEA-COMP:11728"/>
        <dbReference type="ChEBI" id="CHEBI:13193"/>
        <dbReference type="ChEBI" id="CHEBI:15378"/>
        <dbReference type="ChEBI" id="CHEBI:17499"/>
        <dbReference type="ChEBI" id="CHEBI:29950"/>
        <dbReference type="ChEBI" id="CHEBI:30616"/>
        <dbReference type="ChEBI" id="CHEBI:33019"/>
        <dbReference type="ChEBI" id="CHEBI:61963"/>
        <dbReference type="ChEBI" id="CHEBI:65315"/>
        <dbReference type="ChEBI" id="CHEBI:87170"/>
        <dbReference type="ChEBI" id="CHEBI:456215"/>
        <dbReference type="EC" id="2.8.1.13"/>
    </reaction>
</comment>
<comment type="subcellular location">
    <subcellularLocation>
        <location evidence="1">Cytoplasm</location>
    </subcellularLocation>
</comment>
<comment type="similarity">
    <text evidence="1">Belongs to the MnmA/TRMU family.</text>
</comment>
<evidence type="ECO:0000255" key="1">
    <source>
        <dbReference type="HAMAP-Rule" id="MF_00144"/>
    </source>
</evidence>
<proteinExistence type="inferred from homology"/>
<feature type="chain" id="PRO_1000009581" description="tRNA-specific 2-thiouridylase MnmA">
    <location>
        <begin position="1"/>
        <end position="372"/>
    </location>
</feature>
<feature type="region of interest" description="Interaction with target base in tRNA" evidence="1">
    <location>
        <begin position="97"/>
        <end position="99"/>
    </location>
</feature>
<feature type="region of interest" description="Interaction with tRNA" evidence="1">
    <location>
        <begin position="149"/>
        <end position="151"/>
    </location>
</feature>
<feature type="region of interest" description="Interaction with tRNA" evidence="1">
    <location>
        <begin position="309"/>
        <end position="310"/>
    </location>
</feature>
<feature type="active site" description="Nucleophile" evidence="1">
    <location>
        <position position="102"/>
    </location>
</feature>
<feature type="active site" description="Cysteine persulfide intermediate" evidence="1">
    <location>
        <position position="199"/>
    </location>
</feature>
<feature type="binding site" evidence="1">
    <location>
        <begin position="11"/>
        <end position="18"/>
    </location>
    <ligand>
        <name>ATP</name>
        <dbReference type="ChEBI" id="CHEBI:30616"/>
    </ligand>
</feature>
<feature type="binding site" evidence="1">
    <location>
        <position position="37"/>
    </location>
    <ligand>
        <name>ATP</name>
        <dbReference type="ChEBI" id="CHEBI:30616"/>
    </ligand>
</feature>
<feature type="binding site" evidence="1">
    <location>
        <position position="126"/>
    </location>
    <ligand>
        <name>ATP</name>
        <dbReference type="ChEBI" id="CHEBI:30616"/>
    </ligand>
</feature>
<feature type="site" description="Interaction with tRNA" evidence="1">
    <location>
        <position position="127"/>
    </location>
</feature>
<feature type="site" description="Interaction with tRNA" evidence="1">
    <location>
        <position position="342"/>
    </location>
</feature>
<feature type="disulfide bond" description="Alternate" evidence="1">
    <location>
        <begin position="102"/>
        <end position="199"/>
    </location>
</feature>
<sequence length="372" mass="42163">MSNKDIRVVVGMSGGVDSSVTAHVLKEQGYDVIGIFMKNWDDTDENGVCTATEDYNDVIEVCNQIGIPYYAVNFEKEYWDKVFTYFLDEYKKGRTPNPDVMCNKEIKFKAFLDHAMNLGADYVATGHYARIHRHEDGHVEMLRGVDNNKDQTYFLNQLSQQQLSKVMFPIGDIEKSEVRRIAEEQGLVTAKKKDSTGICFIGEKNFKTFLSQYLPAQPGDMITLDGKKMGKHSGLMYYTIGQRHGLGIGGDGDPWFVVGKNLKDNVLYVEQGFHHDALYSDYLIASDYSFVNPEDNDLDQGFECTAKFRYRQKDTKVFVKRENDHALRVTFAEPVRAITPGQAVVFYQGDVCLGGAIIDDVFKNEGQLNYVV</sequence>
<keyword id="KW-0067">ATP-binding</keyword>
<keyword id="KW-0963">Cytoplasm</keyword>
<keyword id="KW-1015">Disulfide bond</keyword>
<keyword id="KW-0547">Nucleotide-binding</keyword>
<keyword id="KW-0694">RNA-binding</keyword>
<keyword id="KW-0808">Transferase</keyword>
<keyword id="KW-0819">tRNA processing</keyword>
<keyword id="KW-0820">tRNA-binding</keyword>
<gene>
    <name evidence="1" type="primary">mnmA</name>
    <name type="synonym">trmU</name>
    <name type="ordered locus">SAB1492c</name>
</gene>
<reference key="1">
    <citation type="journal article" date="2007" name="PLoS ONE">
        <title>Molecular correlates of host specialization in Staphylococcus aureus.</title>
        <authorList>
            <person name="Herron-Olson L."/>
            <person name="Fitzgerald J.R."/>
            <person name="Musser J.M."/>
            <person name="Kapur V."/>
        </authorList>
    </citation>
    <scope>NUCLEOTIDE SEQUENCE [LARGE SCALE GENOMIC DNA]</scope>
    <source>
        <strain>bovine RF122 / ET3-1</strain>
    </source>
</reference>
<dbReference type="EC" id="2.8.1.13" evidence="1"/>
<dbReference type="EMBL" id="AJ938182">
    <property type="protein sequence ID" value="CAI81181.1"/>
    <property type="molecule type" value="Genomic_DNA"/>
</dbReference>
<dbReference type="RefSeq" id="WP_000066095.1">
    <property type="nucleotide sequence ID" value="NC_007622.1"/>
</dbReference>
<dbReference type="SMR" id="Q2YT57"/>
<dbReference type="KEGG" id="sab:SAB1492c"/>
<dbReference type="HOGENOM" id="CLU_035188_1_0_9"/>
<dbReference type="GO" id="GO:0005737">
    <property type="term" value="C:cytoplasm"/>
    <property type="evidence" value="ECO:0007669"/>
    <property type="project" value="UniProtKB-SubCell"/>
</dbReference>
<dbReference type="GO" id="GO:0005524">
    <property type="term" value="F:ATP binding"/>
    <property type="evidence" value="ECO:0007669"/>
    <property type="project" value="UniProtKB-KW"/>
</dbReference>
<dbReference type="GO" id="GO:0000049">
    <property type="term" value="F:tRNA binding"/>
    <property type="evidence" value="ECO:0007669"/>
    <property type="project" value="UniProtKB-KW"/>
</dbReference>
<dbReference type="GO" id="GO:0103016">
    <property type="term" value="F:tRNA-uridine 2-sulfurtransferase activity"/>
    <property type="evidence" value="ECO:0007669"/>
    <property type="project" value="UniProtKB-EC"/>
</dbReference>
<dbReference type="GO" id="GO:0002143">
    <property type="term" value="P:tRNA wobble position uridine thiolation"/>
    <property type="evidence" value="ECO:0007669"/>
    <property type="project" value="TreeGrafter"/>
</dbReference>
<dbReference type="CDD" id="cd01998">
    <property type="entry name" value="MnmA_TRMU-like"/>
    <property type="match status" value="1"/>
</dbReference>
<dbReference type="FunFam" id="2.30.30.280:FF:000001">
    <property type="entry name" value="tRNA-specific 2-thiouridylase MnmA"/>
    <property type="match status" value="1"/>
</dbReference>
<dbReference type="FunFam" id="2.40.30.10:FF:000023">
    <property type="entry name" value="tRNA-specific 2-thiouridylase MnmA"/>
    <property type="match status" value="1"/>
</dbReference>
<dbReference type="FunFam" id="3.40.50.620:FF:000004">
    <property type="entry name" value="tRNA-specific 2-thiouridylase MnmA"/>
    <property type="match status" value="1"/>
</dbReference>
<dbReference type="Gene3D" id="2.30.30.280">
    <property type="entry name" value="Adenine nucleotide alpha hydrolases-like domains"/>
    <property type="match status" value="1"/>
</dbReference>
<dbReference type="Gene3D" id="3.40.50.620">
    <property type="entry name" value="HUPs"/>
    <property type="match status" value="1"/>
</dbReference>
<dbReference type="Gene3D" id="2.40.30.10">
    <property type="entry name" value="Translation factors"/>
    <property type="match status" value="1"/>
</dbReference>
<dbReference type="HAMAP" id="MF_00144">
    <property type="entry name" value="tRNA_thiouridyl_MnmA"/>
    <property type="match status" value="1"/>
</dbReference>
<dbReference type="InterPro" id="IPR004506">
    <property type="entry name" value="MnmA-like"/>
</dbReference>
<dbReference type="InterPro" id="IPR046885">
    <property type="entry name" value="MnmA-like_C"/>
</dbReference>
<dbReference type="InterPro" id="IPR046884">
    <property type="entry name" value="MnmA-like_central"/>
</dbReference>
<dbReference type="InterPro" id="IPR023382">
    <property type="entry name" value="MnmA-like_central_sf"/>
</dbReference>
<dbReference type="InterPro" id="IPR014729">
    <property type="entry name" value="Rossmann-like_a/b/a_fold"/>
</dbReference>
<dbReference type="NCBIfam" id="NF001138">
    <property type="entry name" value="PRK00143.1"/>
    <property type="match status" value="1"/>
</dbReference>
<dbReference type="NCBIfam" id="TIGR00420">
    <property type="entry name" value="trmU"/>
    <property type="match status" value="1"/>
</dbReference>
<dbReference type="PANTHER" id="PTHR11933:SF5">
    <property type="entry name" value="MITOCHONDRIAL TRNA-SPECIFIC 2-THIOURIDYLASE 1"/>
    <property type="match status" value="1"/>
</dbReference>
<dbReference type="PANTHER" id="PTHR11933">
    <property type="entry name" value="TRNA 5-METHYLAMINOMETHYL-2-THIOURIDYLATE -METHYLTRANSFERASE"/>
    <property type="match status" value="1"/>
</dbReference>
<dbReference type="Pfam" id="PF03054">
    <property type="entry name" value="tRNA_Me_trans"/>
    <property type="match status" value="1"/>
</dbReference>
<dbReference type="Pfam" id="PF20258">
    <property type="entry name" value="tRNA_Me_trans_C"/>
    <property type="match status" value="1"/>
</dbReference>
<dbReference type="Pfam" id="PF20259">
    <property type="entry name" value="tRNA_Me_trans_M"/>
    <property type="match status" value="1"/>
</dbReference>
<dbReference type="SUPFAM" id="SSF52402">
    <property type="entry name" value="Adenine nucleotide alpha hydrolases-like"/>
    <property type="match status" value="1"/>
</dbReference>
<accession>Q2YT57</accession>
<organism>
    <name type="scientific">Staphylococcus aureus (strain bovine RF122 / ET3-1)</name>
    <dbReference type="NCBI Taxonomy" id="273036"/>
    <lineage>
        <taxon>Bacteria</taxon>
        <taxon>Bacillati</taxon>
        <taxon>Bacillota</taxon>
        <taxon>Bacilli</taxon>
        <taxon>Bacillales</taxon>
        <taxon>Staphylococcaceae</taxon>
        <taxon>Staphylococcus</taxon>
    </lineage>
</organism>
<protein>
    <recommendedName>
        <fullName evidence="1">tRNA-specific 2-thiouridylase MnmA</fullName>
        <ecNumber evidence="1">2.8.1.13</ecNumber>
    </recommendedName>
</protein>
<name>MNMA_STAAB</name>